<gene>
    <name type="primary">cma</name>
</gene>
<evidence type="ECO:0007829" key="1">
    <source>
        <dbReference type="PDB" id="2XMX"/>
    </source>
</evidence>
<evidence type="ECO:0007829" key="2">
    <source>
        <dbReference type="PDB" id="2XTQ"/>
    </source>
</evidence>
<evidence type="ECO:0007829" key="3">
    <source>
        <dbReference type="PDB" id="3DA4"/>
    </source>
</evidence>
<proteinExistence type="evidence at protein level"/>
<accession>P05820</accession>
<comment type="function">
    <text>Colicins are polypeptide toxins produced by and active against E.coli and closely related bacteria.</text>
</comment>
<comment type="function">
    <text>This is a calcium-requiring inhibitor for murein biosynthesis; it causes lysis of sensitive cells accompanied by murein degradation. The target site is possibly the cytoplasmic membrane.</text>
</comment>
<comment type="miscellaneous">
    <text>This colicin requires TonB for its uptake.</text>
</comment>
<geneLocation type="plasmid">
    <name>ColBM-Cl139</name>
</geneLocation>
<keyword id="KW-0002">3D-structure</keyword>
<keyword id="KW-0044">Antibiotic</keyword>
<keyword id="KW-0929">Antimicrobial</keyword>
<keyword id="KW-0078">Bacteriocin</keyword>
<keyword id="KW-0614">Plasmid</keyword>
<keyword id="KW-0798">TonB box</keyword>
<organism>
    <name type="scientific">Escherichia coli</name>
    <dbReference type="NCBI Taxonomy" id="562"/>
    <lineage>
        <taxon>Bacteria</taxon>
        <taxon>Pseudomonadati</taxon>
        <taxon>Pseudomonadota</taxon>
        <taxon>Gammaproteobacteria</taxon>
        <taxon>Enterobacterales</taxon>
        <taxon>Enterobacteriaceae</taxon>
        <taxon>Escherichia</taxon>
    </lineage>
</organism>
<protein>
    <recommendedName>
        <fullName>Colicin-M</fullName>
    </recommendedName>
</protein>
<feature type="chain" id="PRO_0000218689" description="Colicin-M">
    <location>
        <begin position="1"/>
        <end position="271"/>
    </location>
</feature>
<feature type="short sequence motif" description="TonB box">
    <location>
        <begin position="2"/>
        <end position="9"/>
    </location>
</feature>
<feature type="turn" evidence="1">
    <location>
        <begin position="11"/>
        <end position="13"/>
    </location>
</feature>
<feature type="helix" evidence="1">
    <location>
        <begin position="18"/>
        <end position="21"/>
    </location>
</feature>
<feature type="helix" evidence="1">
    <location>
        <begin position="38"/>
        <end position="45"/>
    </location>
</feature>
<feature type="helix" evidence="1">
    <location>
        <begin position="49"/>
        <end position="65"/>
    </location>
</feature>
<feature type="strand" evidence="2">
    <location>
        <begin position="67"/>
        <end position="69"/>
    </location>
</feature>
<feature type="helix" evidence="1">
    <location>
        <begin position="70"/>
        <end position="92"/>
    </location>
</feature>
<feature type="helix" evidence="1">
    <location>
        <begin position="98"/>
        <end position="104"/>
    </location>
</feature>
<feature type="helix" evidence="1">
    <location>
        <begin position="109"/>
        <end position="111"/>
    </location>
</feature>
<feature type="helix" evidence="1">
    <location>
        <begin position="114"/>
        <end position="117"/>
    </location>
</feature>
<feature type="strand" evidence="3">
    <location>
        <begin position="120"/>
        <end position="122"/>
    </location>
</feature>
<feature type="helix" evidence="1">
    <location>
        <begin position="128"/>
        <end position="138"/>
    </location>
</feature>
<feature type="strand" evidence="3">
    <location>
        <begin position="144"/>
        <end position="146"/>
    </location>
</feature>
<feature type="helix" evidence="1">
    <location>
        <begin position="148"/>
        <end position="150"/>
    </location>
</feature>
<feature type="helix" evidence="1">
    <location>
        <begin position="157"/>
        <end position="159"/>
    </location>
</feature>
<feature type="helix" evidence="1">
    <location>
        <begin position="161"/>
        <end position="168"/>
    </location>
</feature>
<feature type="strand" evidence="1">
    <location>
        <begin position="173"/>
        <end position="184"/>
    </location>
</feature>
<feature type="helix" evidence="1">
    <location>
        <begin position="185"/>
        <end position="187"/>
    </location>
</feature>
<feature type="helix" evidence="1">
    <location>
        <begin position="190"/>
        <end position="195"/>
    </location>
</feature>
<feature type="strand" evidence="1">
    <location>
        <begin position="198"/>
        <end position="209"/>
    </location>
</feature>
<feature type="strand" evidence="1">
    <location>
        <begin position="213"/>
        <end position="231"/>
    </location>
</feature>
<feature type="turn" evidence="1">
    <location>
        <begin position="232"/>
        <end position="234"/>
    </location>
</feature>
<feature type="helix" evidence="1">
    <location>
        <begin position="237"/>
        <end position="249"/>
    </location>
</feature>
<feature type="strand" evidence="1">
    <location>
        <begin position="255"/>
        <end position="258"/>
    </location>
</feature>
<feature type="strand" evidence="1">
    <location>
        <begin position="263"/>
        <end position="270"/>
    </location>
</feature>
<sequence length="271" mass="29483">METLTVHAPSPSTNLPSYGNGAFSLSAPHVPGAGPLLVQVVYSFFQSPNMCLQALTQLEDYIKKHGASNPLTLQIISTNIGYFCNADRNLVLHPGISVYDAYHFAKPAPSQYDYRSMNMKQMSGNVTTPIVALAHYLWGNGAERSVNIANIGLKISPMKINQIKDIIKSGVVGTFPVSTKFTHATGDYNVITGAYLGNITLKTEGTLTISANGSWTYNGVVRSYDDKYDFNASTHRGIIGESLTRLGAMFSGKEYQILLPGEIHIKESGKR</sequence>
<dbReference type="EMBL" id="M16754">
    <property type="protein sequence ID" value="AAA23589.1"/>
    <property type="molecule type" value="Genomic_DNA"/>
</dbReference>
<dbReference type="PIR" id="A27090">
    <property type="entry name" value="IKECM"/>
</dbReference>
<dbReference type="RefSeq" id="WP_000449473.1">
    <property type="nucleotide sequence ID" value="NZ_WXYX01000005.1"/>
</dbReference>
<dbReference type="RefSeq" id="YP_008998009.1">
    <property type="nucleotide sequence ID" value="NC_023315.1"/>
</dbReference>
<dbReference type="PDB" id="2XMX">
    <property type="method" value="X-ray"/>
    <property type="resolution" value="1.67 A"/>
    <property type="chains" value="A/B=1-271"/>
</dbReference>
<dbReference type="PDB" id="2XTQ">
    <property type="method" value="X-ray"/>
    <property type="resolution" value="2.31 A"/>
    <property type="chains" value="A/B/C/D/E/F/G/H=1-271"/>
</dbReference>
<dbReference type="PDB" id="2XTR">
    <property type="method" value="X-ray"/>
    <property type="resolution" value="2.14 A"/>
    <property type="chains" value="A/B=1-271"/>
</dbReference>
<dbReference type="PDB" id="3DA3">
    <property type="method" value="X-ray"/>
    <property type="resolution" value="2.50 A"/>
    <property type="chains" value="A/B=1-271"/>
</dbReference>
<dbReference type="PDB" id="3DA4">
    <property type="method" value="X-ray"/>
    <property type="resolution" value="1.70 A"/>
    <property type="chains" value="A/B=1-271"/>
</dbReference>
<dbReference type="PDBsum" id="2XMX"/>
<dbReference type="PDBsum" id="2XTQ"/>
<dbReference type="PDBsum" id="2XTR"/>
<dbReference type="PDBsum" id="3DA3"/>
<dbReference type="PDBsum" id="3DA4"/>
<dbReference type="SMR" id="P05820"/>
<dbReference type="IntAct" id="P05820">
    <property type="interactions" value="1"/>
</dbReference>
<dbReference type="EvolutionaryTrace" id="P05820"/>
<dbReference type="GO" id="GO:0042742">
    <property type="term" value="P:defense response to bacterium"/>
    <property type="evidence" value="ECO:0007669"/>
    <property type="project" value="UniProtKB-KW"/>
</dbReference>
<dbReference type="GO" id="GO:0031640">
    <property type="term" value="P:killing of cells of another organism"/>
    <property type="evidence" value="ECO:0007669"/>
    <property type="project" value="UniProtKB-KW"/>
</dbReference>
<dbReference type="Gene3D" id="1.20.1440.280">
    <property type="match status" value="1"/>
</dbReference>
<dbReference type="Gene3D" id="3.30.450.400">
    <property type="entry name" value="Colicin M, catalytic domain"/>
    <property type="match status" value="1"/>
</dbReference>
<dbReference type="InterPro" id="IPR028056">
    <property type="entry name" value="Colicin_M"/>
</dbReference>
<dbReference type="Pfam" id="PF14859">
    <property type="entry name" value="Colicin_M"/>
    <property type="match status" value="1"/>
</dbReference>
<reference key="1">
    <citation type="journal article" date="1987" name="J. Bacteriol.">
        <title>Primary structure of colicin M, an inhibitor of murein biosynthesis.</title>
        <authorList>
            <person name="Koeck J."/>
            <person name="Oelschlaeger T."/>
            <person name="Kamp R.M."/>
            <person name="Braun V."/>
        </authorList>
    </citation>
    <scope>NUCLEOTIDE SEQUENCE [GENOMIC DNA]</scope>
</reference>
<name>CEAM_ECOLX</name>